<protein>
    <recommendedName>
        <fullName evidence="1">Small ribosomal subunit protein uS15</fullName>
    </recommendedName>
    <alternativeName>
        <fullName evidence="2">30S ribosomal protein S15</fullName>
    </alternativeName>
</protein>
<keyword id="KW-0687">Ribonucleoprotein</keyword>
<keyword id="KW-0689">Ribosomal protein</keyword>
<keyword id="KW-0694">RNA-binding</keyword>
<keyword id="KW-0699">rRNA-binding</keyword>
<gene>
    <name evidence="1" type="primary">rpsO</name>
    <name type="ordered locus">PFL_0847</name>
</gene>
<comment type="function">
    <text evidence="1">One of the primary rRNA binding proteins, it binds directly to 16S rRNA where it helps nucleate assembly of the platform of the 30S subunit by binding and bridging several RNA helices of the 16S rRNA.</text>
</comment>
<comment type="function">
    <text evidence="1">Forms an intersubunit bridge (bridge B4) with the 23S rRNA of the 50S subunit in the ribosome.</text>
</comment>
<comment type="subunit">
    <text evidence="1">Part of the 30S ribosomal subunit. Forms a bridge to the 50S subunit in the 70S ribosome, contacting the 23S rRNA.</text>
</comment>
<comment type="similarity">
    <text evidence="1">Belongs to the universal ribosomal protein uS15 family.</text>
</comment>
<proteinExistence type="inferred from homology"/>
<feature type="chain" id="PRO_0000115511" description="Small ribosomal subunit protein uS15">
    <location>
        <begin position="1"/>
        <end position="89"/>
    </location>
</feature>
<name>RS15_PSEF5</name>
<reference key="1">
    <citation type="journal article" date="2005" name="Nat. Biotechnol.">
        <title>Complete genome sequence of the plant commensal Pseudomonas fluorescens Pf-5.</title>
        <authorList>
            <person name="Paulsen I.T."/>
            <person name="Press C.M."/>
            <person name="Ravel J."/>
            <person name="Kobayashi D.Y."/>
            <person name="Myers G.S.A."/>
            <person name="Mavrodi D.V."/>
            <person name="DeBoy R.T."/>
            <person name="Seshadri R."/>
            <person name="Ren Q."/>
            <person name="Madupu R."/>
            <person name="Dodson R.J."/>
            <person name="Durkin A.S."/>
            <person name="Brinkac L.M."/>
            <person name="Daugherty S.C."/>
            <person name="Sullivan S.A."/>
            <person name="Rosovitz M.J."/>
            <person name="Gwinn M.L."/>
            <person name="Zhou L."/>
            <person name="Schneider D.J."/>
            <person name="Cartinhour S.W."/>
            <person name="Nelson W.C."/>
            <person name="Weidman J."/>
            <person name="Watkins K."/>
            <person name="Tran K."/>
            <person name="Khouri H."/>
            <person name="Pierson E.A."/>
            <person name="Pierson L.S. III"/>
            <person name="Thomashow L.S."/>
            <person name="Loper J.E."/>
        </authorList>
    </citation>
    <scope>NUCLEOTIDE SEQUENCE [LARGE SCALE GENOMIC DNA]</scope>
    <source>
        <strain>ATCC BAA-477 / NRRL B-23932 / Pf-5</strain>
    </source>
</reference>
<organism>
    <name type="scientific">Pseudomonas fluorescens (strain ATCC BAA-477 / NRRL B-23932 / Pf-5)</name>
    <dbReference type="NCBI Taxonomy" id="220664"/>
    <lineage>
        <taxon>Bacteria</taxon>
        <taxon>Pseudomonadati</taxon>
        <taxon>Pseudomonadota</taxon>
        <taxon>Gammaproteobacteria</taxon>
        <taxon>Pseudomonadales</taxon>
        <taxon>Pseudomonadaceae</taxon>
        <taxon>Pseudomonas</taxon>
    </lineage>
</organism>
<dbReference type="EMBL" id="CP000076">
    <property type="protein sequence ID" value="AAY96245.1"/>
    <property type="molecule type" value="Genomic_DNA"/>
</dbReference>
<dbReference type="RefSeq" id="WP_011059205.1">
    <property type="nucleotide sequence ID" value="NC_004129.6"/>
</dbReference>
<dbReference type="SMR" id="Q4KIF3"/>
<dbReference type="STRING" id="220664.PFL_0847"/>
<dbReference type="GeneID" id="57473848"/>
<dbReference type="KEGG" id="pfl:PFL_0847"/>
<dbReference type="PATRIC" id="fig|220664.5.peg.867"/>
<dbReference type="eggNOG" id="COG0184">
    <property type="taxonomic scope" value="Bacteria"/>
</dbReference>
<dbReference type="HOGENOM" id="CLU_148518_0_0_6"/>
<dbReference type="Proteomes" id="UP000008540">
    <property type="component" value="Chromosome"/>
</dbReference>
<dbReference type="GO" id="GO:0022627">
    <property type="term" value="C:cytosolic small ribosomal subunit"/>
    <property type="evidence" value="ECO:0007669"/>
    <property type="project" value="TreeGrafter"/>
</dbReference>
<dbReference type="GO" id="GO:0019843">
    <property type="term" value="F:rRNA binding"/>
    <property type="evidence" value="ECO:0007669"/>
    <property type="project" value="UniProtKB-UniRule"/>
</dbReference>
<dbReference type="GO" id="GO:0003735">
    <property type="term" value="F:structural constituent of ribosome"/>
    <property type="evidence" value="ECO:0007669"/>
    <property type="project" value="InterPro"/>
</dbReference>
<dbReference type="GO" id="GO:0006412">
    <property type="term" value="P:translation"/>
    <property type="evidence" value="ECO:0007669"/>
    <property type="project" value="UniProtKB-UniRule"/>
</dbReference>
<dbReference type="CDD" id="cd00353">
    <property type="entry name" value="Ribosomal_S15p_S13e"/>
    <property type="match status" value="1"/>
</dbReference>
<dbReference type="FunFam" id="1.10.287.10:FF:000002">
    <property type="entry name" value="30S ribosomal protein S15"/>
    <property type="match status" value="1"/>
</dbReference>
<dbReference type="Gene3D" id="6.10.250.3130">
    <property type="match status" value="1"/>
</dbReference>
<dbReference type="Gene3D" id="1.10.287.10">
    <property type="entry name" value="S15/NS1, RNA-binding"/>
    <property type="match status" value="1"/>
</dbReference>
<dbReference type="HAMAP" id="MF_01343_B">
    <property type="entry name" value="Ribosomal_uS15_B"/>
    <property type="match status" value="1"/>
</dbReference>
<dbReference type="InterPro" id="IPR000589">
    <property type="entry name" value="Ribosomal_uS15"/>
</dbReference>
<dbReference type="InterPro" id="IPR005290">
    <property type="entry name" value="Ribosomal_uS15_bac-type"/>
</dbReference>
<dbReference type="InterPro" id="IPR009068">
    <property type="entry name" value="uS15_NS1_RNA-bd_sf"/>
</dbReference>
<dbReference type="NCBIfam" id="TIGR00952">
    <property type="entry name" value="S15_bact"/>
    <property type="match status" value="1"/>
</dbReference>
<dbReference type="PANTHER" id="PTHR23321">
    <property type="entry name" value="RIBOSOMAL PROTEIN S15, BACTERIAL AND ORGANELLAR"/>
    <property type="match status" value="1"/>
</dbReference>
<dbReference type="PANTHER" id="PTHR23321:SF26">
    <property type="entry name" value="SMALL RIBOSOMAL SUBUNIT PROTEIN US15M"/>
    <property type="match status" value="1"/>
</dbReference>
<dbReference type="Pfam" id="PF00312">
    <property type="entry name" value="Ribosomal_S15"/>
    <property type="match status" value="1"/>
</dbReference>
<dbReference type="SMART" id="SM01387">
    <property type="entry name" value="Ribosomal_S15"/>
    <property type="match status" value="1"/>
</dbReference>
<dbReference type="SUPFAM" id="SSF47060">
    <property type="entry name" value="S15/NS1 RNA-binding domain"/>
    <property type="match status" value="1"/>
</dbReference>
<dbReference type="PROSITE" id="PS00362">
    <property type="entry name" value="RIBOSOMAL_S15"/>
    <property type="match status" value="1"/>
</dbReference>
<sequence>MALSVEEKAQIVTDYQQAVGDTGSPEVQVALLTANINKLQGHFKANGKDHHSRRGLIRMVNQRRKLLDYLKGKDLSRYSTLIGRLGLRR</sequence>
<evidence type="ECO:0000255" key="1">
    <source>
        <dbReference type="HAMAP-Rule" id="MF_01343"/>
    </source>
</evidence>
<evidence type="ECO:0000305" key="2"/>
<accession>Q4KIF3</accession>